<dbReference type="EMBL" id="CP000053">
    <property type="protein sequence ID" value="AAY61143.1"/>
    <property type="molecule type" value="Genomic_DNA"/>
</dbReference>
<dbReference type="SMR" id="Q4UMR5"/>
<dbReference type="STRING" id="315456.RF_0292"/>
<dbReference type="KEGG" id="rfe:RF_0292"/>
<dbReference type="eggNOG" id="COG0096">
    <property type="taxonomic scope" value="Bacteria"/>
</dbReference>
<dbReference type="HOGENOM" id="CLU_098428_0_0_5"/>
<dbReference type="OrthoDB" id="9802617at2"/>
<dbReference type="Proteomes" id="UP000008548">
    <property type="component" value="Chromosome"/>
</dbReference>
<dbReference type="GO" id="GO:1990904">
    <property type="term" value="C:ribonucleoprotein complex"/>
    <property type="evidence" value="ECO:0007669"/>
    <property type="project" value="UniProtKB-KW"/>
</dbReference>
<dbReference type="GO" id="GO:0005840">
    <property type="term" value="C:ribosome"/>
    <property type="evidence" value="ECO:0007669"/>
    <property type="project" value="UniProtKB-KW"/>
</dbReference>
<dbReference type="GO" id="GO:0019843">
    <property type="term" value="F:rRNA binding"/>
    <property type="evidence" value="ECO:0007669"/>
    <property type="project" value="UniProtKB-UniRule"/>
</dbReference>
<dbReference type="GO" id="GO:0003735">
    <property type="term" value="F:structural constituent of ribosome"/>
    <property type="evidence" value="ECO:0007669"/>
    <property type="project" value="InterPro"/>
</dbReference>
<dbReference type="GO" id="GO:0006412">
    <property type="term" value="P:translation"/>
    <property type="evidence" value="ECO:0007669"/>
    <property type="project" value="UniProtKB-UniRule"/>
</dbReference>
<dbReference type="FunFam" id="3.30.1370.30:FF:000002">
    <property type="entry name" value="30S ribosomal protein S8"/>
    <property type="match status" value="1"/>
</dbReference>
<dbReference type="FunFam" id="3.30.1490.10:FF:000001">
    <property type="entry name" value="30S ribosomal protein S8"/>
    <property type="match status" value="1"/>
</dbReference>
<dbReference type="Gene3D" id="3.30.1370.30">
    <property type="match status" value="1"/>
</dbReference>
<dbReference type="Gene3D" id="3.30.1490.10">
    <property type="match status" value="1"/>
</dbReference>
<dbReference type="HAMAP" id="MF_01302_B">
    <property type="entry name" value="Ribosomal_uS8_B"/>
    <property type="match status" value="1"/>
</dbReference>
<dbReference type="InterPro" id="IPR000630">
    <property type="entry name" value="Ribosomal_uS8"/>
</dbReference>
<dbReference type="InterPro" id="IPR047863">
    <property type="entry name" value="Ribosomal_uS8_CS"/>
</dbReference>
<dbReference type="InterPro" id="IPR035987">
    <property type="entry name" value="Ribosomal_uS8_sf"/>
</dbReference>
<dbReference type="NCBIfam" id="NF001109">
    <property type="entry name" value="PRK00136.1"/>
    <property type="match status" value="1"/>
</dbReference>
<dbReference type="PANTHER" id="PTHR11758">
    <property type="entry name" value="40S RIBOSOMAL PROTEIN S15A"/>
    <property type="match status" value="1"/>
</dbReference>
<dbReference type="Pfam" id="PF00410">
    <property type="entry name" value="Ribosomal_S8"/>
    <property type="match status" value="1"/>
</dbReference>
<dbReference type="SUPFAM" id="SSF56047">
    <property type="entry name" value="Ribosomal protein S8"/>
    <property type="match status" value="1"/>
</dbReference>
<dbReference type="PROSITE" id="PS00053">
    <property type="entry name" value="RIBOSOMAL_S8"/>
    <property type="match status" value="1"/>
</dbReference>
<evidence type="ECO:0000255" key="1">
    <source>
        <dbReference type="HAMAP-Rule" id="MF_01302"/>
    </source>
</evidence>
<evidence type="ECO:0000305" key="2"/>
<feature type="chain" id="PRO_0000225889" description="Small ribosomal subunit protein uS8">
    <location>
        <begin position="1"/>
        <end position="132"/>
    </location>
</feature>
<comment type="function">
    <text evidence="1">One of the primary rRNA binding proteins, it binds directly to 16S rRNA central domain where it helps coordinate assembly of the platform of the 30S subunit.</text>
</comment>
<comment type="subunit">
    <text evidence="1">Part of the 30S ribosomal subunit. Contacts proteins S5 and S12.</text>
</comment>
<comment type="similarity">
    <text evidence="1">Belongs to the universal ribosomal protein uS8 family.</text>
</comment>
<name>RS8_RICFE</name>
<sequence length="132" mass="14857">MSMTDNVADMLTRIRNAYKSKLINVSFPSSKIKTSILDVLQKEGYIKDYVTTQKNNISYTEVALKYSVNGDASICEIHRVSKPGKRVYSAIKDLKGYYNNMGIYILSTPYGVMSDREAHIKNVGGEVICKVF</sequence>
<keyword id="KW-0687">Ribonucleoprotein</keyword>
<keyword id="KW-0689">Ribosomal protein</keyword>
<keyword id="KW-0694">RNA-binding</keyword>
<keyword id="KW-0699">rRNA-binding</keyword>
<organism>
    <name type="scientific">Rickettsia felis (strain ATCC VR-1525 / URRWXCal2)</name>
    <name type="common">Rickettsia azadi</name>
    <dbReference type="NCBI Taxonomy" id="315456"/>
    <lineage>
        <taxon>Bacteria</taxon>
        <taxon>Pseudomonadati</taxon>
        <taxon>Pseudomonadota</taxon>
        <taxon>Alphaproteobacteria</taxon>
        <taxon>Rickettsiales</taxon>
        <taxon>Rickettsiaceae</taxon>
        <taxon>Rickettsieae</taxon>
        <taxon>Rickettsia</taxon>
        <taxon>spotted fever group</taxon>
    </lineage>
</organism>
<protein>
    <recommendedName>
        <fullName evidence="1">Small ribosomal subunit protein uS8</fullName>
    </recommendedName>
    <alternativeName>
        <fullName evidence="2">30S ribosomal protein S8</fullName>
    </alternativeName>
</protein>
<proteinExistence type="inferred from homology"/>
<reference key="1">
    <citation type="journal article" date="2005" name="PLoS Biol.">
        <title>The genome sequence of Rickettsia felis identifies the first putative conjugative plasmid in an obligate intracellular parasite.</title>
        <authorList>
            <person name="Ogata H."/>
            <person name="Renesto P."/>
            <person name="Audic S."/>
            <person name="Robert C."/>
            <person name="Blanc G."/>
            <person name="Fournier P.-E."/>
            <person name="Parinello H."/>
            <person name="Claverie J.-M."/>
            <person name="Raoult D."/>
        </authorList>
    </citation>
    <scope>NUCLEOTIDE SEQUENCE [LARGE SCALE GENOMIC DNA]</scope>
    <source>
        <strain>ATCC VR-1525 / URRWXCal2</strain>
    </source>
</reference>
<accession>Q4UMR5</accession>
<gene>
    <name evidence="1" type="primary">rpsH</name>
    <name type="ordered locus">RF_0292</name>
</gene>